<name>ENTIC_APLCA</name>
<sequence length="88" mass="9666">MKTALPLLLLTCLVAAVQSTGSQGCPTYVSEKCTARLQECSNNQQQEPLQNCTAVHADCVVQATEDCQREQSQLNHDHLNNHTTTQQP</sequence>
<keyword id="KW-0903">Direct protein sequencing</keyword>
<keyword id="KW-1015">Disulfide bond</keyword>
<keyword id="KW-0588">Pheromone</keyword>
<keyword id="KW-0964">Secreted</keyword>
<keyword id="KW-0732">Signal</keyword>
<feature type="signal peptide" evidence="2">
    <location>
        <begin position="1"/>
        <end position="19"/>
    </location>
</feature>
<feature type="peptide" id="PRO_0000311915" description="Enticin">
    <location>
        <begin position="20"/>
        <end position="68"/>
    </location>
</feature>
<feature type="propeptide" id="PRO_0000311916">
    <location>
        <begin position="69"/>
        <end position="88"/>
    </location>
</feature>
<feature type="disulfide bond" evidence="2">
    <location>
        <begin position="25"/>
        <end position="33"/>
    </location>
</feature>
<feature type="disulfide bond" evidence="2">
    <location>
        <begin position="40"/>
        <end position="52"/>
    </location>
</feature>
<feature type="disulfide bond" evidence="2">
    <location>
        <begin position="59"/>
        <end position="67"/>
    </location>
</feature>
<evidence type="ECO:0000269" key="1">
    <source>
    </source>
</evidence>
<evidence type="ECO:0000269" key="2">
    <source>
    </source>
</evidence>
<reference key="1">
    <citation type="journal article" date="2004" name="J. Biol. Chem.">
        <title>Characterization of Aplysia enticin and temptin, two novel water-borne protein pheromones that act in concert with attractin to stimulate mate attraction.</title>
        <authorList>
            <person name="Cummins S.F."/>
            <person name="Nichols A.E."/>
            <person name="Amare A."/>
            <person name="Hummon A.B."/>
            <person name="Sweedler J.V."/>
            <person name="Nagle G.T."/>
        </authorList>
    </citation>
    <scope>NUCLEOTIDE SEQUENCE [MRNA]</scope>
    <scope>FUNCTION</scope>
    <scope>SUBCELLULAR LOCATION</scope>
    <scope>INTERACTION WITH ATTRACTIN AND TEMPTIN</scope>
    <source>
        <tissue>Albumen gland</tissue>
    </source>
</reference>
<reference key="2">
    <citation type="journal article" date="2007" name="Peptides">
        <title>Recombinant production and structural studies of the Aplysia water-borne protein pheromone enticin indicates it has a novel disulfide stabilized fold.</title>
        <authorList>
            <person name="Cummins S.F."/>
            <person name="Xie F."/>
            <person name="Misra M."/>
            <person name="Amare A."/>
            <person name="Jakubowski J.A."/>
            <person name="de Vries M.R."/>
            <person name="Sweedler J.V."/>
            <person name="Nagle G.T."/>
            <person name="Schein C.H."/>
        </authorList>
    </citation>
    <scope>PROTEIN SEQUENCE OF 20-88</scope>
    <scope>DICHROISM ANALYSIS</scope>
    <scope>DISULFIDE BONDS</scope>
    <scope>MASS SPECTROMETRY</scope>
</reference>
<organism>
    <name type="scientific">Aplysia californica</name>
    <name type="common">California sea hare</name>
    <dbReference type="NCBI Taxonomy" id="6500"/>
    <lineage>
        <taxon>Eukaryota</taxon>
        <taxon>Metazoa</taxon>
        <taxon>Spiralia</taxon>
        <taxon>Lophotrochozoa</taxon>
        <taxon>Mollusca</taxon>
        <taxon>Gastropoda</taxon>
        <taxon>Heterobranchia</taxon>
        <taxon>Euthyneura</taxon>
        <taxon>Tectipleura</taxon>
        <taxon>Aplysiida</taxon>
        <taxon>Aplysioidea</taxon>
        <taxon>Aplysiidae</taxon>
        <taxon>Aplysia</taxon>
    </lineage>
</organism>
<comment type="function">
    <text evidence="1">A component of the complex of water-borne protein pheromones that stimulates attraction and mating behavior.</text>
</comment>
<comment type="subunit">
    <text>Binds to attractin and temptin.</text>
</comment>
<comment type="subcellular location">
    <subcellularLocation>
        <location evidence="1">Secreted</location>
    </subcellularLocation>
</comment>
<comment type="mass spectrometry" mass="5307.3" error="7.0" method="Electrospray" evidence="2"/>
<accession>Q8I817</accession>
<protein>
    <recommendedName>
        <fullName>Enticin</fullName>
    </recommendedName>
</protein>
<proteinExistence type="evidence at protein level"/>
<dbReference type="EMBL" id="AY162291">
    <property type="protein sequence ID" value="AAN83923.1"/>
    <property type="molecule type" value="mRNA"/>
</dbReference>
<dbReference type="RefSeq" id="NP_001191527.1">
    <property type="nucleotide sequence ID" value="NM_001204598.1"/>
</dbReference>
<dbReference type="EnsemblMetazoa" id="NM_001204598.1">
    <property type="protein sequence ID" value="NP_001191527.1"/>
    <property type="gene ID" value="LOC100533299"/>
</dbReference>
<dbReference type="GeneID" id="100533299"/>
<dbReference type="Proteomes" id="UP000694888">
    <property type="component" value="Unplaced"/>
</dbReference>
<dbReference type="GO" id="GO:0005576">
    <property type="term" value="C:extracellular region"/>
    <property type="evidence" value="ECO:0007669"/>
    <property type="project" value="UniProtKB-SubCell"/>
</dbReference>
<dbReference type="GO" id="GO:0005186">
    <property type="term" value="F:pheromone activity"/>
    <property type="evidence" value="ECO:0007669"/>
    <property type="project" value="UniProtKB-KW"/>
</dbReference>